<sequence>MNSQIRQNFHQECEAAINRQVNMELYASYVYLSMSYYFDRDDVALKNFAKYFLHQSHEEREHAEKLMKMQNQRGGRLFLQDIKKPERDEWANGLEALECSLQLEKNVNQSILELHKLSTDHNDPHLCDFLESHYLDEQVKSMKELGDHITNLRRMGAPSNGLAEYLFDKHTLGEDHE</sequence>
<organism evidence="7">
    <name type="scientific">Xenopus laevis</name>
    <name type="common">African clawed frog</name>
    <dbReference type="NCBI Taxonomy" id="8355"/>
    <lineage>
        <taxon>Eukaryota</taxon>
        <taxon>Metazoa</taxon>
        <taxon>Chordata</taxon>
        <taxon>Craniata</taxon>
        <taxon>Vertebrata</taxon>
        <taxon>Euteleostomi</taxon>
        <taxon>Amphibia</taxon>
        <taxon>Batrachia</taxon>
        <taxon>Anura</taxon>
        <taxon>Pipoidea</taxon>
        <taxon>Pipidae</taxon>
        <taxon>Xenopodinae</taxon>
        <taxon>Xenopus</taxon>
        <taxon>Xenopus</taxon>
    </lineage>
</organism>
<protein>
    <recommendedName>
        <fullName>Ferritin heavy chain, oocyte isoform</fullName>
        <ecNumber evidence="2">1.16.3.1</ecNumber>
    </recommendedName>
    <alternativeName>
        <fullName>A-ferritin</fullName>
    </alternativeName>
    <alternativeName>
        <fullName>GV-HCH</fullName>
    </alternativeName>
    <alternativeName>
        <fullName>XeAF</fullName>
    </alternativeName>
</protein>
<reference evidence="6" key="1">
    <citation type="journal article" date="2003" name="DNA Seq.">
        <title>Two types of new ferritin cDNA sequences from Xenopus laevis germinal vesicle oocytes.</title>
        <authorList>
            <person name="Huang W.-H."/>
            <person name="Guo H.-B."/>
            <person name="Huang X.-Y."/>
            <person name="Sun F.-Z."/>
        </authorList>
    </citation>
    <scope>NUCLEOTIDE SEQUENCE [MRNA]</scope>
    <scope>PROTEIN SEQUENCE OF 77-83; 106-116; 144-153 AND 155-177</scope>
    <source>
        <tissue evidence="5">Oocyte</tissue>
    </source>
</reference>
<proteinExistence type="evidence at protein level"/>
<keyword id="KW-0963">Cytoplasm</keyword>
<keyword id="KW-0903">Direct protein sequencing</keyword>
<keyword id="KW-0408">Iron</keyword>
<keyword id="KW-0409">Iron storage</keyword>
<keyword id="KW-0479">Metal-binding</keyword>
<keyword id="KW-0560">Oxidoreductase</keyword>
<keyword id="KW-1185">Reference proteome</keyword>
<dbReference type="EC" id="1.16.3.1" evidence="2"/>
<dbReference type="EMBL" id="AF538970">
    <property type="protein sequence ID" value="AAQ10928.1"/>
    <property type="molecule type" value="mRNA"/>
</dbReference>
<dbReference type="SMR" id="Q7SXA6"/>
<dbReference type="AGR" id="Xenbase:XB-GENE-955508"/>
<dbReference type="Xenbase" id="XB-GENE-955508">
    <property type="gene designation" value="ftmt.S"/>
</dbReference>
<dbReference type="Proteomes" id="UP000186698">
    <property type="component" value="Unplaced"/>
</dbReference>
<dbReference type="GO" id="GO:0005737">
    <property type="term" value="C:cytoplasm"/>
    <property type="evidence" value="ECO:0000318"/>
    <property type="project" value="GO_Central"/>
</dbReference>
<dbReference type="GO" id="GO:0008199">
    <property type="term" value="F:ferric iron binding"/>
    <property type="evidence" value="ECO:0000318"/>
    <property type="project" value="GO_Central"/>
</dbReference>
<dbReference type="GO" id="GO:0008198">
    <property type="term" value="F:ferrous iron binding"/>
    <property type="evidence" value="ECO:0000318"/>
    <property type="project" value="GO_Central"/>
</dbReference>
<dbReference type="GO" id="GO:0004322">
    <property type="term" value="F:ferroxidase activity"/>
    <property type="evidence" value="ECO:0007669"/>
    <property type="project" value="UniProtKB-EC"/>
</dbReference>
<dbReference type="GO" id="GO:0006879">
    <property type="term" value="P:intracellular iron ion homeostasis"/>
    <property type="evidence" value="ECO:0007669"/>
    <property type="project" value="UniProtKB-KW"/>
</dbReference>
<dbReference type="GO" id="GO:0006826">
    <property type="term" value="P:iron ion transport"/>
    <property type="evidence" value="ECO:0007669"/>
    <property type="project" value="InterPro"/>
</dbReference>
<dbReference type="CDD" id="cd01056">
    <property type="entry name" value="Euk_Ferritin"/>
    <property type="match status" value="1"/>
</dbReference>
<dbReference type="FunFam" id="1.20.1260.10:FF:000016">
    <property type="entry name" value="Ferritin heavy chain"/>
    <property type="match status" value="1"/>
</dbReference>
<dbReference type="Gene3D" id="1.20.1260.10">
    <property type="match status" value="1"/>
</dbReference>
<dbReference type="InterPro" id="IPR001519">
    <property type="entry name" value="Ferritin"/>
</dbReference>
<dbReference type="InterPro" id="IPR012347">
    <property type="entry name" value="Ferritin-like"/>
</dbReference>
<dbReference type="InterPro" id="IPR009040">
    <property type="entry name" value="Ferritin-like_diiron"/>
</dbReference>
<dbReference type="InterPro" id="IPR009078">
    <property type="entry name" value="Ferritin-like_SF"/>
</dbReference>
<dbReference type="InterPro" id="IPR014034">
    <property type="entry name" value="Ferritin_CS"/>
</dbReference>
<dbReference type="InterPro" id="IPR008331">
    <property type="entry name" value="Ferritin_DPS_dom"/>
</dbReference>
<dbReference type="PANTHER" id="PTHR11431">
    <property type="entry name" value="FERRITIN"/>
    <property type="match status" value="1"/>
</dbReference>
<dbReference type="PANTHER" id="PTHR11431:SF37">
    <property type="entry name" value="FERRITIN HEAVY CHAIN"/>
    <property type="match status" value="1"/>
</dbReference>
<dbReference type="Pfam" id="PF00210">
    <property type="entry name" value="Ferritin"/>
    <property type="match status" value="1"/>
</dbReference>
<dbReference type="SUPFAM" id="SSF47240">
    <property type="entry name" value="Ferritin-like"/>
    <property type="match status" value="1"/>
</dbReference>
<dbReference type="PROSITE" id="PS00540">
    <property type="entry name" value="FERRITIN_1"/>
    <property type="match status" value="1"/>
</dbReference>
<dbReference type="PROSITE" id="PS00204">
    <property type="entry name" value="FERRITIN_2"/>
    <property type="match status" value="1"/>
</dbReference>
<dbReference type="PROSITE" id="PS50905">
    <property type="entry name" value="FERRITIN_LIKE"/>
    <property type="match status" value="1"/>
</dbReference>
<feature type="chain" id="PRO_0000201079" description="Ferritin heavy chain, oocyte isoform">
    <location>
        <begin position="1"/>
        <end position="177"/>
    </location>
</feature>
<feature type="domain" description="Ferritin-like diiron" evidence="4 6">
    <location>
        <begin position="7"/>
        <end position="156"/>
    </location>
</feature>
<feature type="binding site" evidence="4">
    <location>
        <position position="24"/>
    </location>
    <ligand>
        <name>Fe cation</name>
        <dbReference type="ChEBI" id="CHEBI:24875"/>
        <label>1</label>
    </ligand>
</feature>
<feature type="binding site" evidence="4">
    <location>
        <position position="59"/>
    </location>
    <ligand>
        <name>Fe cation</name>
        <dbReference type="ChEBI" id="CHEBI:24875"/>
        <label>1</label>
    </ligand>
</feature>
<feature type="binding site" evidence="4">
    <location>
        <position position="59"/>
    </location>
    <ligand>
        <name>Fe cation</name>
        <dbReference type="ChEBI" id="CHEBI:24875"/>
        <label>2</label>
    </ligand>
</feature>
<feature type="binding site" evidence="4">
    <location>
        <position position="62"/>
    </location>
    <ligand>
        <name>Fe cation</name>
        <dbReference type="ChEBI" id="CHEBI:24875"/>
        <label>1</label>
    </ligand>
</feature>
<feature type="binding site" evidence="4">
    <location>
        <position position="104"/>
    </location>
    <ligand>
        <name>Fe cation</name>
        <dbReference type="ChEBI" id="CHEBI:24875"/>
        <label>2</label>
    </ligand>
</feature>
<feature type="binding site" evidence="4">
    <location>
        <position position="138"/>
    </location>
    <ligand>
        <name>Fe cation</name>
        <dbReference type="ChEBI" id="CHEBI:24875"/>
        <label>2</label>
    </ligand>
</feature>
<feature type="sequence conflict" description="In Ref. 1; AA sequence." evidence="6" ref="1">
    <original>I</original>
    <variation>L</variation>
    <location>
        <position position="82"/>
    </location>
</feature>
<feature type="sequence conflict" description="In Ref. 1; AA sequence." evidence="6" ref="1">
    <original>I</original>
    <variation>L</variation>
    <location>
        <position position="111"/>
    </location>
</feature>
<feature type="sequence conflict" description="In Ref. 1; AA sequence." evidence="6" ref="1">
    <original>IT</original>
    <variation>LA</variation>
    <location>
        <begin position="149"/>
        <end position="150"/>
    </location>
</feature>
<feature type="sequence conflict" description="In Ref. 1; AA sequence." evidence="6" ref="1">
    <original>GE</original>
    <variation>W</variation>
    <location>
        <begin position="173"/>
        <end position="174"/>
    </location>
</feature>
<comment type="function">
    <text evidence="2">Stores iron in a soluble, non-toxic, readily available form. Important for iron homeostasis. Has ferroxidase activity. Iron is taken up in the ferrous form and deposited as ferric hydroxides after oxidation.</text>
</comment>
<comment type="catalytic activity">
    <reaction evidence="2">
        <text>4 Fe(2+) + O2 + 4 H(+) = 4 Fe(3+) + 2 H2O</text>
        <dbReference type="Rhea" id="RHEA:11148"/>
        <dbReference type="ChEBI" id="CHEBI:15377"/>
        <dbReference type="ChEBI" id="CHEBI:15378"/>
        <dbReference type="ChEBI" id="CHEBI:15379"/>
        <dbReference type="ChEBI" id="CHEBI:29033"/>
        <dbReference type="ChEBI" id="CHEBI:29034"/>
        <dbReference type="EC" id="1.16.3.1"/>
    </reaction>
</comment>
<comment type="subunit">
    <text evidence="2">Oligomer of 24 subunits. There are two types of subunits: L (light) chain and H (heavy) chain. The functional molecule is roughly spherical and contains a central cavity into which the insoluble mineral iron core is deposited.</text>
</comment>
<comment type="subcellular location">
    <subcellularLocation>
        <location evidence="3">Cytoplasm</location>
    </subcellularLocation>
</comment>
<comment type="miscellaneous">
    <text evidence="1">There are three types of ferritin subunits in amphibia: L, M and H chains. M and H chains are fast mineralizing; the L chain is very slow mineralizing (By similarity).</text>
</comment>
<comment type="similarity">
    <text evidence="6">Belongs to the ferritin family.</text>
</comment>
<evidence type="ECO:0000250" key="1"/>
<evidence type="ECO:0000250" key="2">
    <source>
        <dbReference type="UniProtKB" id="P02794"/>
    </source>
</evidence>
<evidence type="ECO:0000250" key="3">
    <source>
        <dbReference type="UniProtKB" id="P19130"/>
    </source>
</evidence>
<evidence type="ECO:0000255" key="4">
    <source>
        <dbReference type="PROSITE-ProRule" id="PRU00085"/>
    </source>
</evidence>
<evidence type="ECO:0000269" key="5">
    <source>
    </source>
</evidence>
<evidence type="ECO:0000305" key="6"/>
<evidence type="ECO:0000312" key="7">
    <source>
        <dbReference type="EMBL" id="AAQ10928.1"/>
    </source>
</evidence>
<accession>Q7SXA6</accession>
<accession>P83457</accession>
<accession>P83460</accession>
<accession>P83462</accession>
<accession>P83463</accession>
<name>FRIH3_XENLA</name>